<evidence type="ECO:0000250" key="1"/>
<evidence type="ECO:0000250" key="2">
    <source>
        <dbReference type="UniProtKB" id="P54619"/>
    </source>
</evidence>
<evidence type="ECO:0000250" key="3">
    <source>
        <dbReference type="UniProtKB" id="P80385"/>
    </source>
</evidence>
<evidence type="ECO:0000255" key="4">
    <source>
        <dbReference type="PROSITE-ProRule" id="PRU00703"/>
    </source>
</evidence>
<evidence type="ECO:0000256" key="5">
    <source>
        <dbReference type="SAM" id="MobiDB-lite"/>
    </source>
</evidence>
<evidence type="ECO:0000269" key="6">
    <source>
    </source>
</evidence>
<evidence type="ECO:0000305" key="7"/>
<accession>O54950</accession>
<accession>Q5PRE8</accession>
<reference key="1">
    <citation type="journal article" date="2001" name="Cytogenet. Cell Genet.">
        <title>Cloning, organisation, chromosomal localization and expression analysis of the mouse Prkag1 gene.</title>
        <authorList>
            <person name="Shamsadin R."/>
            <person name="Jantsan K."/>
            <person name="Adham I.M."/>
            <person name="Engel W."/>
        </authorList>
    </citation>
    <scope>NUCLEOTIDE SEQUENCE [MRNA]</scope>
    <source>
        <tissue>Testis</tissue>
    </source>
</reference>
<reference key="2">
    <citation type="journal article" date="2004" name="Genome Res.">
        <title>The status, quality, and expansion of the NIH full-length cDNA project: the Mammalian Gene Collection (MGC).</title>
        <authorList>
            <consortium name="The MGC Project Team"/>
        </authorList>
    </citation>
    <scope>NUCLEOTIDE SEQUENCE [LARGE SCALE MRNA]</scope>
    <source>
        <strain>C57BL/6J</strain>
        <tissue>Eye</tissue>
    </source>
</reference>
<reference key="3">
    <citation type="journal article" date="2010" name="Cell">
        <title>A tissue-specific atlas of mouse protein phosphorylation and expression.</title>
        <authorList>
            <person name="Huttlin E.L."/>
            <person name="Jedrychowski M.P."/>
            <person name="Elias J.E."/>
            <person name="Goswami T."/>
            <person name="Rad R."/>
            <person name="Beausoleil S.A."/>
            <person name="Villen J."/>
            <person name="Haas W."/>
            <person name="Sowa M.E."/>
            <person name="Gygi S.P."/>
        </authorList>
    </citation>
    <scope>IDENTIFICATION BY MASS SPECTROMETRY [LARGE SCALE ANALYSIS]</scope>
    <source>
        <tissue>Brain</tissue>
        <tissue>Brown adipose tissue</tissue>
        <tissue>Heart</tissue>
        <tissue>Kidney</tissue>
        <tissue>Liver</tissue>
        <tissue>Lung</tissue>
        <tissue>Pancreas</tissue>
        <tissue>Spleen</tissue>
        <tissue>Testis</tissue>
    </source>
</reference>
<reference key="4">
    <citation type="journal article" date="2011" name="Autophagy">
        <title>Ulk1-mediated phosphorylation of AMPK constitutes a negative regulatory feedback loop.</title>
        <authorList>
            <person name="Loffler A.S."/>
            <person name="Alers S."/>
            <person name="Dieterle A.M."/>
            <person name="Keppeler H."/>
            <person name="Franz-Wachtel M."/>
            <person name="Kundu M."/>
            <person name="Campbell D.G."/>
            <person name="Wesselborg S."/>
            <person name="Alessi D.R."/>
            <person name="Stork B."/>
        </authorList>
    </citation>
    <scope>PHOSPHORYLATION BY ULK1 AND ULK2</scope>
</reference>
<protein>
    <recommendedName>
        <fullName>5'-AMP-activated protein kinase subunit gamma-1</fullName>
        <shortName>AMPK gamma1</shortName>
        <shortName>AMPK subunit gamma-1</shortName>
        <shortName>AMPKg</shortName>
    </recommendedName>
</protein>
<comment type="function">
    <text evidence="2">AMP/ATP-binding subunit of AMP-activated protein kinase (AMPK), an energy sensor protein kinase that plays a key role in regulating cellular energy metabolism. In response to reduction of intracellular ATP levels, AMPK activates energy-producing pathways and inhibits energy-consuming processes: inhibits protein, carbohydrate and lipid biosynthesis, as well as cell growth and proliferation. AMPK acts via direct phosphorylation of metabolic enzymes, and by longer-term effects via phosphorylation of transcription regulators. Also acts as a regulator of cellular polarity by remodeling the actin cytoskeleton; probably by indirectly activating myosin. Gamma non-catalytic subunit mediates binding to AMP, ADP and ATP, leading to activate or inhibit AMPK: AMP-binding results in allosteric activation of alpha catalytic subunit (PRKAA1 or PRKAA2) both by inducing phosphorylation and preventing dephosphorylation of catalytic subunits. ADP also stimulates phosphorylation, without stimulating already phosphorylated catalytic subunit. ATP promotes dephosphorylation of catalytic subunit, rendering the AMPK enzyme inactive.</text>
</comment>
<comment type="subunit">
    <text evidence="2">AMPK is a heterotrimer of an alpha catalytic subunit (PRKAA1 or PRKAA2), a beta (PRKAB1 or PRKAB2) and a gamma non-catalytic subunits (PRKAG1, PRKAG2 or PRKAG3). Interacts with FNIP1 and FNIP2.</text>
</comment>
<comment type="domain">
    <text evidence="1">The AMPK pseudosubstrate motif resembles the sequence around sites phosphorylated on target proteins of AMPK, except the presence of a non-phosphorylatable residue in place of Ser. In the absence of AMP this pseudosubstrate sequence may bind to the active site groove on the alpha subunit (PRKAA1 or PRKAA2), preventing phosphorylation by the upstream activating kinase STK11/LKB1 (By similarity).</text>
</comment>
<comment type="domain">
    <text evidence="3">The 4 CBS domains mediate binding to nucleotides. Of the 4 potential nucleotide-binding sites, 3 are occupied, designated as sites 1, 3, and 4 based on the CBS modules that provide the acidic residue for coordination with the 2'- and 3'-hydroxyl groups of the ribose of AMP. Of these, site 4 appears to be a structural site that retains a tightly held AMP molecule (AMP 3). The 2 remaining sites, 1 and 3, can bind either AMP, ADP or ATP. Site 1 (AMP, ADP or ATP 1) is the high-affinity binding site and likely accommodates AMP or ADP. Site 3 (AMP, ADP or ATP 2) is the weakest nucleotide-binding site on the gamma subunit, yet it is exquisitely sensitive to changes in nucleotide levels and this allows AMPK to respond rapidly to changes in cellular energy status. Site 3 is likely to be responsible for protection of a conserved threonine in the activation loop of the alpha catalytic subunit through conformational changes induced by binding of AMP or ADP.</text>
</comment>
<comment type="PTM">
    <text evidence="6">Phosphorylated by ULK1 and ULK2; leading to negatively regulate AMPK activity and suggesting the existence of a regulatory feedback loop between ULK1, ULK2 and AMPK.</text>
</comment>
<comment type="PTM">
    <text evidence="2">Glycosylated; O-GlcNAcylated by OGT, promoting the AMP-activated protein kinase (AMPK) activity.</text>
</comment>
<comment type="similarity">
    <text evidence="7">Belongs to the 5'-AMP-activated protein kinase gamma subunit family.</text>
</comment>
<organism>
    <name type="scientific">Mus musculus</name>
    <name type="common">Mouse</name>
    <dbReference type="NCBI Taxonomy" id="10090"/>
    <lineage>
        <taxon>Eukaryota</taxon>
        <taxon>Metazoa</taxon>
        <taxon>Chordata</taxon>
        <taxon>Craniata</taxon>
        <taxon>Vertebrata</taxon>
        <taxon>Euteleostomi</taxon>
        <taxon>Mammalia</taxon>
        <taxon>Eutheria</taxon>
        <taxon>Euarchontoglires</taxon>
        <taxon>Glires</taxon>
        <taxon>Rodentia</taxon>
        <taxon>Myomorpha</taxon>
        <taxon>Muroidea</taxon>
        <taxon>Muridae</taxon>
        <taxon>Murinae</taxon>
        <taxon>Mus</taxon>
        <taxon>Mus</taxon>
    </lineage>
</organism>
<dbReference type="EMBL" id="AF036535">
    <property type="protein sequence ID" value="AAB95475.1"/>
    <property type="molecule type" value="mRNA"/>
</dbReference>
<dbReference type="EMBL" id="BC086660">
    <property type="protein sequence ID" value="AAH86660.1"/>
    <property type="molecule type" value="mRNA"/>
</dbReference>
<dbReference type="CCDS" id="CCDS49724.1"/>
<dbReference type="RefSeq" id="NP_058061.2">
    <property type="nucleotide sequence ID" value="NM_016781.3"/>
</dbReference>
<dbReference type="SMR" id="O54950"/>
<dbReference type="BioGRID" id="202364">
    <property type="interactions" value="6"/>
</dbReference>
<dbReference type="ComplexPortal" id="CPX-5698">
    <property type="entry name" value="AMPK complex, alpha1-beta1-gamma1 variant"/>
</dbReference>
<dbReference type="ComplexPortal" id="CPX-5851">
    <property type="entry name" value="AMPK complex, alpha2-beta2-gamma1 variant"/>
</dbReference>
<dbReference type="ComplexPortal" id="CPX-5852">
    <property type="entry name" value="AMPK complex, alpha2-beta1-gamma1 variant"/>
</dbReference>
<dbReference type="ComplexPortal" id="CPX-5853">
    <property type="entry name" value="AMPK complex, alpha1-beta2-gamma1 variant"/>
</dbReference>
<dbReference type="CORUM" id="O54950"/>
<dbReference type="FunCoup" id="O54950">
    <property type="interactions" value="2692"/>
</dbReference>
<dbReference type="IntAct" id="O54950">
    <property type="interactions" value="5"/>
</dbReference>
<dbReference type="MINT" id="O54950"/>
<dbReference type="STRING" id="10090.ENSMUSP00000132499"/>
<dbReference type="BindingDB" id="O54950"/>
<dbReference type="ChEMBL" id="CHEMBL4524004"/>
<dbReference type="GlyGen" id="O54950">
    <property type="glycosylation" value="1 site, 1 O-linked glycan (1 site)"/>
</dbReference>
<dbReference type="iPTMnet" id="O54950"/>
<dbReference type="PhosphoSitePlus" id="O54950"/>
<dbReference type="SwissPalm" id="O54950"/>
<dbReference type="jPOST" id="O54950"/>
<dbReference type="PaxDb" id="10090-ENSMUSP00000132499"/>
<dbReference type="PeptideAtlas" id="O54950"/>
<dbReference type="ProteomicsDB" id="296431"/>
<dbReference type="Pumba" id="O54950"/>
<dbReference type="Antibodypedia" id="25778">
    <property type="antibodies" value="451 antibodies from 35 providers"/>
</dbReference>
<dbReference type="DNASU" id="19082"/>
<dbReference type="Ensembl" id="ENSMUST00000168846.3">
    <property type="protein sequence ID" value="ENSMUSP00000132499.2"/>
    <property type="gene ID" value="ENSMUSG00000067713.8"/>
</dbReference>
<dbReference type="GeneID" id="19082"/>
<dbReference type="KEGG" id="mmu:19082"/>
<dbReference type="UCSC" id="uc007xoa.1">
    <property type="organism name" value="mouse"/>
</dbReference>
<dbReference type="AGR" id="MGI:108411"/>
<dbReference type="CTD" id="5571"/>
<dbReference type="MGI" id="MGI:108411">
    <property type="gene designation" value="Prkag1"/>
</dbReference>
<dbReference type="VEuPathDB" id="HostDB:ENSMUSG00000067713"/>
<dbReference type="eggNOG" id="KOG1764">
    <property type="taxonomic scope" value="Eukaryota"/>
</dbReference>
<dbReference type="GeneTree" id="ENSGT00950000183019"/>
<dbReference type="HOGENOM" id="CLU_021740_3_0_1"/>
<dbReference type="InParanoid" id="O54950"/>
<dbReference type="OMA" id="TASIHPF"/>
<dbReference type="OrthoDB" id="449052at2759"/>
<dbReference type="PhylomeDB" id="O54950"/>
<dbReference type="TreeFam" id="TF313247"/>
<dbReference type="Reactome" id="R-MMU-1632852">
    <property type="pathway name" value="Macroautophagy"/>
</dbReference>
<dbReference type="Reactome" id="R-MMU-380972">
    <property type="pathway name" value="Energy dependent regulation of mTOR by LKB1-AMPK"/>
</dbReference>
<dbReference type="Reactome" id="R-MMU-5628897">
    <property type="pathway name" value="TP53 Regulates Metabolic Genes"/>
</dbReference>
<dbReference type="Reactome" id="R-MMU-6804756">
    <property type="pathway name" value="Regulation of TP53 Activity through Phosphorylation"/>
</dbReference>
<dbReference type="BioGRID-ORCS" id="19082">
    <property type="hits" value="4 hits in 81 CRISPR screens"/>
</dbReference>
<dbReference type="ChiTaRS" id="Prkag1">
    <property type="organism name" value="mouse"/>
</dbReference>
<dbReference type="PRO" id="PR:O54950"/>
<dbReference type="Proteomes" id="UP000000589">
    <property type="component" value="Chromosome 15"/>
</dbReference>
<dbReference type="RNAct" id="O54950">
    <property type="molecule type" value="protein"/>
</dbReference>
<dbReference type="Bgee" id="ENSMUSG00000067713">
    <property type="expression patterns" value="Expressed in saccule of membranous labyrinth and 256 other cell types or tissues"/>
</dbReference>
<dbReference type="ExpressionAtlas" id="O54950">
    <property type="expression patterns" value="baseline and differential"/>
</dbReference>
<dbReference type="GO" id="GO:0005829">
    <property type="term" value="C:cytosol"/>
    <property type="evidence" value="ECO:0000304"/>
    <property type="project" value="Reactome"/>
</dbReference>
<dbReference type="GO" id="GO:0005654">
    <property type="term" value="C:nucleoplasm"/>
    <property type="evidence" value="ECO:0000304"/>
    <property type="project" value="Reactome"/>
</dbReference>
<dbReference type="GO" id="GO:0031588">
    <property type="term" value="C:nucleotide-activated protein kinase complex"/>
    <property type="evidence" value="ECO:0000250"/>
    <property type="project" value="UniProtKB"/>
</dbReference>
<dbReference type="GO" id="GO:0005634">
    <property type="term" value="C:nucleus"/>
    <property type="evidence" value="ECO:0000314"/>
    <property type="project" value="MGI"/>
</dbReference>
<dbReference type="GO" id="GO:0043531">
    <property type="term" value="F:ADP binding"/>
    <property type="evidence" value="ECO:0000250"/>
    <property type="project" value="UniProtKB"/>
</dbReference>
<dbReference type="GO" id="GO:0016208">
    <property type="term" value="F:AMP binding"/>
    <property type="evidence" value="ECO:0000250"/>
    <property type="project" value="UniProtKB"/>
</dbReference>
<dbReference type="GO" id="GO:0004679">
    <property type="term" value="F:AMP-activated protein kinase activity"/>
    <property type="evidence" value="ECO:0000304"/>
    <property type="project" value="MGI"/>
</dbReference>
<dbReference type="GO" id="GO:0005524">
    <property type="term" value="F:ATP binding"/>
    <property type="evidence" value="ECO:0000250"/>
    <property type="project" value="UniProtKB"/>
</dbReference>
<dbReference type="GO" id="GO:0019901">
    <property type="term" value="F:protein kinase binding"/>
    <property type="evidence" value="ECO:0007669"/>
    <property type="project" value="Ensembl"/>
</dbReference>
<dbReference type="GO" id="GO:0019887">
    <property type="term" value="F:protein kinase regulator activity"/>
    <property type="evidence" value="ECO:0000250"/>
    <property type="project" value="UniProtKB"/>
</dbReference>
<dbReference type="GO" id="GO:0044877">
    <property type="term" value="F:protein-containing complex binding"/>
    <property type="evidence" value="ECO:0007669"/>
    <property type="project" value="Ensembl"/>
</dbReference>
<dbReference type="GO" id="GO:0031669">
    <property type="term" value="P:cellular response to nutrient levels"/>
    <property type="evidence" value="ECO:0000266"/>
    <property type="project" value="ComplexPortal"/>
</dbReference>
<dbReference type="GO" id="GO:0006633">
    <property type="term" value="P:fatty acid biosynthetic process"/>
    <property type="evidence" value="ECO:0007669"/>
    <property type="project" value="UniProtKB-KW"/>
</dbReference>
<dbReference type="GO" id="GO:0051170">
    <property type="term" value="P:import into nucleus"/>
    <property type="evidence" value="ECO:0000315"/>
    <property type="project" value="UniProtKB"/>
</dbReference>
<dbReference type="CDD" id="cd04618">
    <property type="entry name" value="CBS_euAMPK_gamma-like_repeat1"/>
    <property type="match status" value="1"/>
</dbReference>
<dbReference type="CDD" id="cd04641">
    <property type="entry name" value="CBS_euAMPK_gamma-like_repeat2"/>
    <property type="match status" value="1"/>
</dbReference>
<dbReference type="FunFam" id="3.10.580.10:FF:000003">
    <property type="entry name" value="Protein kinase AMP-activated non-catalytic subunit gamma 1"/>
    <property type="match status" value="1"/>
</dbReference>
<dbReference type="FunFam" id="3.10.580.10:FF:000004">
    <property type="entry name" value="Protein kinase AMP-activated non-catalytic subunit gamma 2"/>
    <property type="match status" value="1"/>
</dbReference>
<dbReference type="Gene3D" id="3.10.580.10">
    <property type="entry name" value="CBS-domain"/>
    <property type="match status" value="2"/>
</dbReference>
<dbReference type="InterPro" id="IPR050511">
    <property type="entry name" value="AMPK_gamma/SDS23_families"/>
</dbReference>
<dbReference type="InterPro" id="IPR000644">
    <property type="entry name" value="CBS_dom"/>
</dbReference>
<dbReference type="InterPro" id="IPR046342">
    <property type="entry name" value="CBS_dom_sf"/>
</dbReference>
<dbReference type="PANTHER" id="PTHR13780:SF38">
    <property type="entry name" value="5'-AMP-ACTIVATED PROTEIN KINASE SUBUNIT GAMMA-1"/>
    <property type="match status" value="1"/>
</dbReference>
<dbReference type="PANTHER" id="PTHR13780">
    <property type="entry name" value="AMP-ACTIVATED PROTEIN KINASE, GAMMA REGULATORY SUBUNIT"/>
    <property type="match status" value="1"/>
</dbReference>
<dbReference type="Pfam" id="PF00571">
    <property type="entry name" value="CBS"/>
    <property type="match status" value="4"/>
</dbReference>
<dbReference type="SMART" id="SM00116">
    <property type="entry name" value="CBS"/>
    <property type="match status" value="4"/>
</dbReference>
<dbReference type="SUPFAM" id="SSF54631">
    <property type="entry name" value="CBS-domain pair"/>
    <property type="match status" value="2"/>
</dbReference>
<dbReference type="PROSITE" id="PS51371">
    <property type="entry name" value="CBS"/>
    <property type="match status" value="4"/>
</dbReference>
<name>AAKG1_MOUSE</name>
<proteinExistence type="evidence at protein level"/>
<keyword id="KW-0067">ATP-binding</keyword>
<keyword id="KW-0129">CBS domain</keyword>
<keyword id="KW-0275">Fatty acid biosynthesis</keyword>
<keyword id="KW-0276">Fatty acid metabolism</keyword>
<keyword id="KW-0325">Glycoprotein</keyword>
<keyword id="KW-0444">Lipid biosynthesis</keyword>
<keyword id="KW-0443">Lipid metabolism</keyword>
<keyword id="KW-0547">Nucleotide-binding</keyword>
<keyword id="KW-0597">Phosphoprotein</keyword>
<keyword id="KW-1185">Reference proteome</keyword>
<keyword id="KW-0677">Repeat</keyword>
<sequence>MESVAAESSPALENEHFQETPESNNSVYTSFMKSHRCYDLIPTSSKLVVFDTSLQVKKAFFALVTNGVRAAPLWDSKKQSFVGMLTITDFINILHRYYKSALVQIYELEEHKIETWREVYLQDSFKPLVCISPNASLFDAVSSLIRNKIHRLPVIDPESGNTLYILTHKRILKFLKLFITEFPKPEFMSKSLQELQIGTYANIAMVRTTTPVYVALGIFVQHRVSALPVVDEKGRVVDIYSKFDVINLAAEKTYNNLDVSVTKALQHRSHYFEGVLKCYLHETLETIINRLVEAEVHRLVVVDEHDVVKGIVSLSDILQALVLTGGEKKP</sequence>
<feature type="chain" id="PRO_0000204378" description="5'-AMP-activated protein kinase subunit gamma-1">
    <location>
        <begin position="1"/>
        <end position="330"/>
    </location>
</feature>
<feature type="domain" description="CBS 1" evidence="4">
    <location>
        <begin position="42"/>
        <end position="102"/>
    </location>
</feature>
<feature type="domain" description="CBS 2" evidence="4">
    <location>
        <begin position="124"/>
        <end position="186"/>
    </location>
</feature>
<feature type="domain" description="CBS 3" evidence="4">
    <location>
        <begin position="197"/>
        <end position="259"/>
    </location>
</feature>
<feature type="domain" description="CBS 4" evidence="4">
    <location>
        <begin position="271"/>
        <end position="328"/>
    </location>
</feature>
<feature type="region of interest" description="Disordered" evidence="5">
    <location>
        <begin position="1"/>
        <end position="21"/>
    </location>
</feature>
<feature type="short sequence motif" description="AMPK pseudosubstrate">
    <location>
        <begin position="137"/>
        <end position="158"/>
    </location>
</feature>
<feature type="binding site" evidence="3">
    <location>
        <position position="69"/>
    </location>
    <ligand>
        <name>ADP</name>
        <dbReference type="ChEBI" id="CHEBI:456216"/>
        <label>2</label>
    </ligand>
</feature>
<feature type="binding site" evidence="3">
    <location>
        <position position="69"/>
    </location>
    <ligand>
        <name>AMP</name>
        <dbReference type="ChEBI" id="CHEBI:456215"/>
        <label>2</label>
    </ligand>
</feature>
<feature type="binding site" evidence="3">
    <location>
        <position position="69"/>
    </location>
    <ligand>
        <name>ATP</name>
        <dbReference type="ChEBI" id="CHEBI:30616"/>
        <label>1</label>
    </ligand>
</feature>
<feature type="binding site" evidence="3">
    <location>
        <position position="69"/>
    </location>
    <ligand>
        <name>ATP</name>
        <dbReference type="ChEBI" id="CHEBI:30616"/>
        <label>2</label>
    </ligand>
</feature>
<feature type="binding site" evidence="3">
    <location>
        <begin position="84"/>
        <end position="89"/>
    </location>
    <ligand>
        <name>ADP</name>
        <dbReference type="ChEBI" id="CHEBI:456216"/>
        <label>1</label>
    </ligand>
</feature>
<feature type="binding site" evidence="3">
    <location>
        <begin position="84"/>
        <end position="89"/>
    </location>
    <ligand>
        <name>AMP</name>
        <dbReference type="ChEBI" id="CHEBI:456215"/>
        <label>1</label>
    </ligand>
</feature>
<feature type="binding site" evidence="3">
    <location>
        <begin position="84"/>
        <end position="89"/>
    </location>
    <ligand>
        <name>ATP</name>
        <dbReference type="ChEBI" id="CHEBI:30616"/>
        <label>1</label>
    </ligand>
</feature>
<feature type="binding site" evidence="3">
    <location>
        <position position="129"/>
    </location>
    <ligand>
        <name>ADP</name>
        <dbReference type="ChEBI" id="CHEBI:456216"/>
        <label>1</label>
    </ligand>
</feature>
<feature type="binding site" evidence="3">
    <location>
        <position position="129"/>
    </location>
    <ligand>
        <name>AMP</name>
        <dbReference type="ChEBI" id="CHEBI:456215"/>
        <label>1</label>
    </ligand>
</feature>
<feature type="binding site" evidence="3">
    <location>
        <position position="129"/>
    </location>
    <ligand>
        <name>ATP</name>
        <dbReference type="ChEBI" id="CHEBI:30616"/>
        <label>1</label>
    </ligand>
</feature>
<feature type="binding site" evidence="3">
    <location>
        <begin position="150"/>
        <end position="151"/>
    </location>
    <ligand>
        <name>ADP</name>
        <dbReference type="ChEBI" id="CHEBI:456216"/>
        <label>1</label>
    </ligand>
</feature>
<feature type="binding site" evidence="3">
    <location>
        <begin position="150"/>
        <end position="151"/>
    </location>
    <ligand>
        <name>AMP</name>
        <dbReference type="ChEBI" id="CHEBI:456215"/>
        <label>1</label>
    </ligand>
</feature>
<feature type="binding site" evidence="3">
    <location>
        <begin position="150"/>
        <end position="151"/>
    </location>
    <ligand>
        <name>ATP</name>
        <dbReference type="ChEBI" id="CHEBI:30616"/>
        <label>1</label>
    </ligand>
</feature>
<feature type="binding site" evidence="3">
    <location>
        <position position="150"/>
    </location>
    <ligand>
        <name>AMP</name>
        <dbReference type="ChEBI" id="CHEBI:456215"/>
        <label>3</label>
    </ligand>
</feature>
<feature type="binding site" evidence="3">
    <location>
        <position position="151"/>
    </location>
    <ligand>
        <name>ATP</name>
        <dbReference type="ChEBI" id="CHEBI:30616"/>
        <label>2</label>
    </ligand>
</feature>
<feature type="binding site" evidence="3">
    <location>
        <position position="169"/>
    </location>
    <ligand>
        <name>ADP</name>
        <dbReference type="ChEBI" id="CHEBI:456216"/>
        <label>2</label>
    </ligand>
</feature>
<feature type="binding site" evidence="3">
    <location>
        <position position="169"/>
    </location>
    <ligand>
        <name>AMP</name>
        <dbReference type="ChEBI" id="CHEBI:456215"/>
        <label>2</label>
    </ligand>
</feature>
<feature type="binding site" evidence="3">
    <location>
        <position position="169"/>
    </location>
    <ligand>
        <name>ATP</name>
        <dbReference type="ChEBI" id="CHEBI:30616"/>
        <label>2</label>
    </ligand>
</feature>
<feature type="binding site" evidence="3">
    <location>
        <position position="199"/>
    </location>
    <ligand>
        <name>AMP</name>
        <dbReference type="ChEBI" id="CHEBI:456215"/>
        <label>3</label>
    </ligand>
</feature>
<feature type="binding site" evidence="3">
    <location>
        <position position="204"/>
    </location>
    <ligand>
        <name>AMP</name>
        <dbReference type="ChEBI" id="CHEBI:456215"/>
        <label>3</label>
    </ligand>
</feature>
<feature type="binding site" evidence="3">
    <location>
        <begin position="225"/>
        <end position="226"/>
    </location>
    <ligand>
        <name>AMP</name>
        <dbReference type="ChEBI" id="CHEBI:456215"/>
        <label>3</label>
    </ligand>
</feature>
<feature type="binding site" evidence="3">
    <location>
        <begin position="241"/>
        <end position="244"/>
    </location>
    <ligand>
        <name>ADP</name>
        <dbReference type="ChEBI" id="CHEBI:456216"/>
        <label>2</label>
    </ligand>
</feature>
<feature type="binding site" evidence="3">
    <location>
        <begin position="241"/>
        <end position="244"/>
    </location>
    <ligand>
        <name>AMP</name>
        <dbReference type="ChEBI" id="CHEBI:456215"/>
        <label>2</label>
    </ligand>
</feature>
<feature type="binding site" evidence="3">
    <location>
        <begin position="241"/>
        <end position="244"/>
    </location>
    <ligand>
        <name>ATP</name>
        <dbReference type="ChEBI" id="CHEBI:30616"/>
        <label>2</label>
    </ligand>
</feature>
<feature type="binding site" evidence="3">
    <location>
        <position position="268"/>
    </location>
    <ligand>
        <name>ADP</name>
        <dbReference type="ChEBI" id="CHEBI:456216"/>
        <label>2</label>
    </ligand>
</feature>
<feature type="binding site" evidence="3">
    <location>
        <position position="268"/>
    </location>
    <ligand>
        <name>AMP</name>
        <dbReference type="ChEBI" id="CHEBI:456215"/>
        <label>2</label>
    </ligand>
</feature>
<feature type="binding site" evidence="3">
    <location>
        <position position="268"/>
    </location>
    <ligand>
        <name>ATP</name>
        <dbReference type="ChEBI" id="CHEBI:30616"/>
        <label>2</label>
    </ligand>
</feature>
<feature type="binding site" evidence="3">
    <location>
        <position position="276"/>
    </location>
    <ligand>
        <name>ADP</name>
        <dbReference type="ChEBI" id="CHEBI:456216"/>
        <label>2</label>
    </ligand>
</feature>
<feature type="binding site" evidence="3">
    <location>
        <position position="276"/>
    </location>
    <ligand>
        <name>AMP</name>
        <dbReference type="ChEBI" id="CHEBI:456215"/>
        <label>2</label>
    </ligand>
</feature>
<feature type="binding site" evidence="3">
    <location>
        <position position="276"/>
    </location>
    <ligand>
        <name>ATP</name>
        <dbReference type="ChEBI" id="CHEBI:30616"/>
        <label>2</label>
    </ligand>
</feature>
<feature type="binding site" evidence="3">
    <location>
        <begin position="297"/>
        <end position="298"/>
    </location>
    <ligand>
        <name>ADP</name>
        <dbReference type="ChEBI" id="CHEBI:456216"/>
        <label>2</label>
    </ligand>
</feature>
<feature type="binding site" evidence="3">
    <location>
        <begin position="297"/>
        <end position="298"/>
    </location>
    <ligand>
        <name>AMP</name>
        <dbReference type="ChEBI" id="CHEBI:456215"/>
        <label>2</label>
    </ligand>
</feature>
<feature type="binding site" evidence="3">
    <location>
        <begin position="297"/>
        <end position="298"/>
    </location>
    <ligand>
        <name>ATP</name>
        <dbReference type="ChEBI" id="CHEBI:30616"/>
        <label>2</label>
    </ligand>
</feature>
<feature type="binding site" evidence="3">
    <location>
        <position position="297"/>
    </location>
    <ligand>
        <name>AMP</name>
        <dbReference type="ChEBI" id="CHEBI:456215"/>
        <label>3</label>
    </ligand>
</feature>
<feature type="binding site" evidence="3">
    <location>
        <begin position="313"/>
        <end position="316"/>
    </location>
    <ligand>
        <name>AMP</name>
        <dbReference type="ChEBI" id="CHEBI:456215"/>
        <label>3</label>
    </ligand>
</feature>
<feature type="modified residue" description="Phosphoserine; by ULK1" evidence="3">
    <location>
        <position position="260"/>
    </location>
</feature>
<feature type="modified residue" description="Phosphothreonine; by ULK1" evidence="3">
    <location>
        <position position="262"/>
    </location>
</feature>
<feature type="modified residue" description="Phosphoserine; by ULK1" evidence="3">
    <location>
        <position position="269"/>
    </location>
</feature>
<feature type="sequence conflict" description="In Ref. 1; AAB95475." evidence="7" ref="1">
    <original>S</original>
    <variation>C</variation>
    <location>
        <position position="80"/>
    </location>
</feature>
<feature type="sequence conflict" description="In Ref. 1; AAB95475." evidence="7" ref="1">
    <original>L</original>
    <variation>S</variation>
    <location>
        <position position="137"/>
    </location>
</feature>
<feature type="sequence conflict" description="In Ref. 1; AAB95475." evidence="7" ref="1">
    <original>T</original>
    <variation>I</variation>
    <location>
        <position position="180"/>
    </location>
</feature>
<feature type="sequence conflict" description="In Ref. 1; AAB95475." evidence="7" ref="1">
    <original>A</original>
    <variation>D</variation>
    <location>
        <position position="320"/>
    </location>
</feature>
<gene>
    <name type="primary">Prkag1</name>
    <name type="synonym">Prkaac</name>
</gene>